<comment type="function">
    <text evidence="1">Catalyzes the NADPH-dependent reduction of glutamyl-tRNA(Glu) to glutamate 1-semialdehyde (GSA).</text>
</comment>
<comment type="catalytic activity">
    <reaction evidence="1">
        <text>(S)-4-amino-5-oxopentanoate + tRNA(Glu) + NADP(+) = L-glutamyl-tRNA(Glu) + NADPH + H(+)</text>
        <dbReference type="Rhea" id="RHEA:12344"/>
        <dbReference type="Rhea" id="RHEA-COMP:9663"/>
        <dbReference type="Rhea" id="RHEA-COMP:9680"/>
        <dbReference type="ChEBI" id="CHEBI:15378"/>
        <dbReference type="ChEBI" id="CHEBI:57501"/>
        <dbReference type="ChEBI" id="CHEBI:57783"/>
        <dbReference type="ChEBI" id="CHEBI:58349"/>
        <dbReference type="ChEBI" id="CHEBI:78442"/>
        <dbReference type="ChEBI" id="CHEBI:78520"/>
        <dbReference type="EC" id="1.2.1.70"/>
    </reaction>
</comment>
<comment type="pathway">
    <text evidence="1">Porphyrin-containing compound metabolism; protoporphyrin-IX biosynthesis; 5-aminolevulinate from L-glutamyl-tRNA(Glu): step 1/2.</text>
</comment>
<comment type="subunit">
    <text evidence="1">Homodimer.</text>
</comment>
<comment type="domain">
    <text evidence="1">Possesses an unusual extended V-shaped dimeric structure with each monomer consisting of three distinct domains arranged along a curved 'spinal' alpha-helix. The N-terminal catalytic domain specifically recognizes the glutamate moiety of the substrate. The second domain is the NADPH-binding domain, and the third C-terminal domain is responsible for dimerization.</text>
</comment>
<comment type="miscellaneous">
    <text evidence="1">During catalysis, the active site Cys acts as a nucleophile attacking the alpha-carbonyl group of tRNA-bound glutamate with the formation of a thioester intermediate between enzyme and glutamate, and the concomitant release of tRNA(Glu). The thioester intermediate is finally reduced by direct hydride transfer from NADPH, to form the product GSA.</text>
</comment>
<comment type="similarity">
    <text evidence="1">Belongs to the glutamyl-tRNA reductase family.</text>
</comment>
<organism>
    <name type="scientific">Saccharolobus islandicus (strain Y.G.57.14 / Yellowstone #1)</name>
    <name type="common">Sulfolobus islandicus</name>
    <dbReference type="NCBI Taxonomy" id="439386"/>
    <lineage>
        <taxon>Archaea</taxon>
        <taxon>Thermoproteota</taxon>
        <taxon>Thermoprotei</taxon>
        <taxon>Sulfolobales</taxon>
        <taxon>Sulfolobaceae</taxon>
        <taxon>Saccharolobus</taxon>
    </lineage>
</organism>
<reference key="1">
    <citation type="journal article" date="2009" name="Proc. Natl. Acad. Sci. U.S.A.">
        <title>Biogeography of the Sulfolobus islandicus pan-genome.</title>
        <authorList>
            <person name="Reno M.L."/>
            <person name="Held N.L."/>
            <person name="Fields C.J."/>
            <person name="Burke P.V."/>
            <person name="Whitaker R.J."/>
        </authorList>
    </citation>
    <scope>NUCLEOTIDE SEQUENCE [LARGE SCALE GENOMIC DNA]</scope>
    <source>
        <strain>Y.G.57.14 / Yellowstone #1</strain>
    </source>
</reference>
<proteinExistence type="inferred from homology"/>
<name>HEM1_SACI7</name>
<protein>
    <recommendedName>
        <fullName evidence="1">Glutamyl-tRNA reductase</fullName>
        <shortName evidence="1">GluTR</shortName>
        <ecNumber evidence="1">1.2.1.70</ecNumber>
    </recommendedName>
</protein>
<sequence>MTSNEELLQNYCSILFTYKTIGISNLHLYYFRETEIKSLRQLINAEFAILQTCNRVEIYLYSNTNTISEINKMIQYLNNVHNEPIGNQARVICGKDSIKHLFLVASGADSLSIGEYEILSQIRSTIDMFKKLGFSGKYLQILFERAIKVGRKVREETSISKGKVGIYSLAIDEAKRQFNNFYDRKIVIVGAGEMGQKIANMLYNEGVKNVTIMNRTVEKAKQLALKFGYNYEKLDLDKLGSFDIAFISISHENLRLENKWNTLIVDITVPPLFTGNNVITLEELEKISKLNFKAREEELVKINKLVEDGIDELIYDYKKEIYSEFMSKIMKRVETIRENEIVRAYKELEKLGINNQQVKEILDLMTRSIIKKSFQPLFDNVRSLVFDGENSINYINFLIDIFKDGNIPIFETKKIKKKQISKRSSS</sequence>
<dbReference type="EC" id="1.2.1.70" evidence="1"/>
<dbReference type="EMBL" id="CP001403">
    <property type="protein sequence ID" value="ACP46331.1"/>
    <property type="molecule type" value="Genomic_DNA"/>
</dbReference>
<dbReference type="RefSeq" id="WP_012711926.1">
    <property type="nucleotide sequence ID" value="NC_012622.1"/>
</dbReference>
<dbReference type="SMR" id="C3N844"/>
<dbReference type="KEGG" id="siy:YG5714_2077"/>
<dbReference type="HOGENOM" id="CLU_035113_0_0_2"/>
<dbReference type="UniPathway" id="UPA00251">
    <property type="reaction ID" value="UER00316"/>
</dbReference>
<dbReference type="Proteomes" id="UP000002308">
    <property type="component" value="Chromosome"/>
</dbReference>
<dbReference type="GO" id="GO:0008883">
    <property type="term" value="F:glutamyl-tRNA reductase activity"/>
    <property type="evidence" value="ECO:0007669"/>
    <property type="project" value="UniProtKB-UniRule"/>
</dbReference>
<dbReference type="GO" id="GO:0050661">
    <property type="term" value="F:NADP binding"/>
    <property type="evidence" value="ECO:0007669"/>
    <property type="project" value="InterPro"/>
</dbReference>
<dbReference type="GO" id="GO:0019353">
    <property type="term" value="P:protoporphyrinogen IX biosynthetic process from glutamate"/>
    <property type="evidence" value="ECO:0007669"/>
    <property type="project" value="TreeGrafter"/>
</dbReference>
<dbReference type="CDD" id="cd05213">
    <property type="entry name" value="NAD_bind_Glutamyl_tRNA_reduct"/>
    <property type="match status" value="1"/>
</dbReference>
<dbReference type="FunFam" id="3.30.460.30:FF:000002">
    <property type="entry name" value="Glutamyl-tRNA reductase"/>
    <property type="match status" value="1"/>
</dbReference>
<dbReference type="Gene3D" id="3.30.460.30">
    <property type="entry name" value="Glutamyl-tRNA reductase, N-terminal domain"/>
    <property type="match status" value="1"/>
</dbReference>
<dbReference type="Gene3D" id="3.40.50.720">
    <property type="entry name" value="NAD(P)-binding Rossmann-like Domain"/>
    <property type="match status" value="1"/>
</dbReference>
<dbReference type="HAMAP" id="MF_00087">
    <property type="entry name" value="Glu_tRNA_reductase"/>
    <property type="match status" value="1"/>
</dbReference>
<dbReference type="InterPro" id="IPR000343">
    <property type="entry name" value="4pyrrol_synth_GluRdtase"/>
</dbReference>
<dbReference type="InterPro" id="IPR015896">
    <property type="entry name" value="4pyrrol_synth_GluRdtase_dimer"/>
</dbReference>
<dbReference type="InterPro" id="IPR015895">
    <property type="entry name" value="4pyrrol_synth_GluRdtase_N"/>
</dbReference>
<dbReference type="InterPro" id="IPR018214">
    <property type="entry name" value="GluRdtase_CS"/>
</dbReference>
<dbReference type="InterPro" id="IPR036453">
    <property type="entry name" value="GluRdtase_dimer_dom_sf"/>
</dbReference>
<dbReference type="InterPro" id="IPR036343">
    <property type="entry name" value="GluRdtase_N_sf"/>
</dbReference>
<dbReference type="InterPro" id="IPR036291">
    <property type="entry name" value="NAD(P)-bd_dom_sf"/>
</dbReference>
<dbReference type="InterPro" id="IPR006151">
    <property type="entry name" value="Shikm_DH/Glu-tRNA_Rdtase"/>
</dbReference>
<dbReference type="NCBIfam" id="TIGR01035">
    <property type="entry name" value="hemA"/>
    <property type="match status" value="1"/>
</dbReference>
<dbReference type="NCBIfam" id="NF000751">
    <property type="entry name" value="PRK00045.4-1"/>
    <property type="match status" value="1"/>
</dbReference>
<dbReference type="NCBIfam" id="NF000752">
    <property type="entry name" value="PRK00045.4-2"/>
    <property type="match status" value="1"/>
</dbReference>
<dbReference type="PANTHER" id="PTHR43013">
    <property type="entry name" value="GLUTAMYL-TRNA REDUCTASE"/>
    <property type="match status" value="1"/>
</dbReference>
<dbReference type="PANTHER" id="PTHR43013:SF1">
    <property type="entry name" value="GLUTAMYL-TRNA REDUCTASE"/>
    <property type="match status" value="1"/>
</dbReference>
<dbReference type="Pfam" id="PF00745">
    <property type="entry name" value="GlutR_dimer"/>
    <property type="match status" value="1"/>
</dbReference>
<dbReference type="Pfam" id="PF05201">
    <property type="entry name" value="GlutR_N"/>
    <property type="match status" value="1"/>
</dbReference>
<dbReference type="Pfam" id="PF01488">
    <property type="entry name" value="Shikimate_DH"/>
    <property type="match status" value="1"/>
</dbReference>
<dbReference type="PIRSF" id="PIRSF000445">
    <property type="entry name" value="4pyrrol_synth_GluRdtase"/>
    <property type="match status" value="1"/>
</dbReference>
<dbReference type="SUPFAM" id="SSF69742">
    <property type="entry name" value="Glutamyl tRNA-reductase catalytic, N-terminal domain"/>
    <property type="match status" value="1"/>
</dbReference>
<dbReference type="SUPFAM" id="SSF69075">
    <property type="entry name" value="Glutamyl tRNA-reductase dimerization domain"/>
    <property type="match status" value="1"/>
</dbReference>
<dbReference type="SUPFAM" id="SSF51735">
    <property type="entry name" value="NAD(P)-binding Rossmann-fold domains"/>
    <property type="match status" value="1"/>
</dbReference>
<dbReference type="PROSITE" id="PS00747">
    <property type="entry name" value="GLUTR"/>
    <property type="match status" value="1"/>
</dbReference>
<evidence type="ECO:0000255" key="1">
    <source>
        <dbReference type="HAMAP-Rule" id="MF_00087"/>
    </source>
</evidence>
<accession>C3N844</accession>
<keyword id="KW-0521">NADP</keyword>
<keyword id="KW-0560">Oxidoreductase</keyword>
<keyword id="KW-0627">Porphyrin biosynthesis</keyword>
<gene>
    <name evidence="1" type="primary">hemA</name>
    <name type="ordered locus">YG5714_2077</name>
</gene>
<feature type="chain" id="PRO_1000202647" description="Glutamyl-tRNA reductase">
    <location>
        <begin position="1"/>
        <end position="426"/>
    </location>
</feature>
<feature type="active site" description="Nucleophile" evidence="1">
    <location>
        <position position="53"/>
    </location>
</feature>
<feature type="binding site" evidence="1">
    <location>
        <begin position="52"/>
        <end position="55"/>
    </location>
    <ligand>
        <name>substrate</name>
    </ligand>
</feature>
<feature type="binding site" evidence="1">
    <location>
        <position position="110"/>
    </location>
    <ligand>
        <name>substrate</name>
    </ligand>
</feature>
<feature type="binding site" evidence="1">
    <location>
        <begin position="115"/>
        <end position="117"/>
    </location>
    <ligand>
        <name>substrate</name>
    </ligand>
</feature>
<feature type="binding site" evidence="1">
    <location>
        <position position="121"/>
    </location>
    <ligand>
        <name>substrate</name>
    </ligand>
</feature>
<feature type="binding site" evidence="1">
    <location>
        <begin position="190"/>
        <end position="195"/>
    </location>
    <ligand>
        <name>NADP(+)</name>
        <dbReference type="ChEBI" id="CHEBI:58349"/>
    </ligand>
</feature>
<feature type="site" description="Important for activity" evidence="1">
    <location>
        <position position="100"/>
    </location>
</feature>